<reference key="1">
    <citation type="journal article" date="1999" name="Biochemistry">
        <title>Sequencing and preliminary characterization of the Na+-translocating NADH:ubiquinone oxidoreductase from Vibrio harveyi.</title>
        <authorList>
            <person name="Zhou W."/>
            <person name="Bertsova Y.V."/>
            <person name="Feng B."/>
            <person name="Tsatsos P."/>
            <person name="Verkhovskaya M.L."/>
            <person name="Gennis R.B."/>
            <person name="Bogachev A.V."/>
            <person name="Barquera B."/>
        </authorList>
    </citation>
    <scope>NUCLEOTIDE SEQUENCE [GENOMIC DNA]</scope>
</reference>
<reference key="2">
    <citation type="submission" date="2007-08" db="EMBL/GenBank/DDBJ databases">
        <authorList>
            <consortium name="The Vibrio harveyi Genome Sequencing Project"/>
            <person name="Bassler B."/>
            <person name="Clifton S.W."/>
            <person name="Fulton L."/>
            <person name="Delehaunty K."/>
            <person name="Fronick C."/>
            <person name="Harrison M."/>
            <person name="Markivic C."/>
            <person name="Fulton R."/>
            <person name="Tin-Wollam A.-M."/>
            <person name="Shah N."/>
            <person name="Pepin K."/>
            <person name="Nash W."/>
            <person name="Thiruvilangam P."/>
            <person name="Bhonagiri V."/>
            <person name="Waters C."/>
            <person name="Tu K.C."/>
            <person name="Irgon J."/>
            <person name="Wilson R.K."/>
        </authorList>
    </citation>
    <scope>NUCLEOTIDE SEQUENCE [LARGE SCALE GENOMIC DNA]</scope>
    <source>
        <strain>ATCC BAA-1116 / BB120</strain>
    </source>
</reference>
<organism>
    <name type="scientific">Vibrio campbellii (strain ATCC BAA-1116)</name>
    <dbReference type="NCBI Taxonomy" id="2902295"/>
    <lineage>
        <taxon>Bacteria</taxon>
        <taxon>Pseudomonadati</taxon>
        <taxon>Pseudomonadota</taxon>
        <taxon>Gammaproteobacteria</taxon>
        <taxon>Vibrionales</taxon>
        <taxon>Vibrionaceae</taxon>
        <taxon>Vibrio</taxon>
    </lineage>
</organism>
<sequence length="446" mass="48365">MITIKKGLALPIAGAPSQVINDGKTIKKVALLGEEYVGMRPTMHVRVGDEVKKAQVLFEDKKNPGVKFTAPAAGKVIEINRGAKRVLQSVVIEVAGEEQVTFDKFEAAQLAGLDREVIKTQLVESGLWTALRTRPFSKVPAIESATKAIFVTAMDTNPLAAQPELIITEQQEAFVAGLDILSALTEGKVYVCKSGTSLPSSSQSNVEEHVFDGPHPAGLAGTHMHFLYPVNAENVAWSINYQDVIAFGQLFLTGELYTDRVVSLAGPVVNNPRLLRTVVGASLEDLTDSELMPGEVRVISGSVLSGTQASGPHAYLGRYHQQVSVLREGRDKELFGWATPGKNKFSITKSFLGHIFKGQLFNMTTTTNGSDRAMVPIGNYERVMPLDMEPTLLLRDLCAGDTDSAQTLGALELDEEDLALCTFVCPGKYEYGQLLRECLDTIVKEG</sequence>
<evidence type="ECO:0000255" key="1">
    <source>
        <dbReference type="HAMAP-Rule" id="MF_00425"/>
    </source>
</evidence>
<evidence type="ECO:0000305" key="2"/>
<name>NQRA_VIBC1</name>
<keyword id="KW-0406">Ion transport</keyword>
<keyword id="KW-0520">NAD</keyword>
<keyword id="KW-0915">Sodium</keyword>
<keyword id="KW-0739">Sodium transport</keyword>
<keyword id="KW-1278">Translocase</keyword>
<keyword id="KW-0813">Transport</keyword>
<keyword id="KW-0830">Ubiquinone</keyword>
<proteinExistence type="inferred from homology"/>
<comment type="function">
    <text evidence="1">NQR complex catalyzes the reduction of ubiquinone-1 to ubiquinol by two successive reactions, coupled with the transport of Na(+) ions from the cytoplasm to the periplasm. NqrA to NqrE are probably involved in the second step, the conversion of ubisemiquinone to ubiquinol.</text>
</comment>
<comment type="catalytic activity">
    <reaction evidence="1">
        <text>a ubiquinone + n Na(+)(in) + NADH + H(+) = a ubiquinol + n Na(+)(out) + NAD(+)</text>
        <dbReference type="Rhea" id="RHEA:47748"/>
        <dbReference type="Rhea" id="RHEA-COMP:9565"/>
        <dbReference type="Rhea" id="RHEA-COMP:9566"/>
        <dbReference type="ChEBI" id="CHEBI:15378"/>
        <dbReference type="ChEBI" id="CHEBI:16389"/>
        <dbReference type="ChEBI" id="CHEBI:17976"/>
        <dbReference type="ChEBI" id="CHEBI:29101"/>
        <dbReference type="ChEBI" id="CHEBI:57540"/>
        <dbReference type="ChEBI" id="CHEBI:57945"/>
        <dbReference type="EC" id="7.2.1.1"/>
    </reaction>
</comment>
<comment type="subunit">
    <text evidence="1">Composed of six subunits; NqrA, NqrB, NqrC, NqrD, NqrE and NqrF.</text>
</comment>
<comment type="similarity">
    <text evidence="1">Belongs to the NqrA family.</text>
</comment>
<comment type="sequence caution" evidence="2">
    <conflict type="erroneous initiation">
        <sequence resource="EMBL-CDS" id="ABU72223"/>
    </conflict>
</comment>
<accession>Q9RFW1</accession>
<accession>A7N1U6</accession>
<feature type="chain" id="PRO_0000214206" description="Na(+)-translocating NADH-quinone reductase subunit A">
    <location>
        <begin position="1"/>
        <end position="446"/>
    </location>
</feature>
<gene>
    <name evidence="1" type="primary">nqrA</name>
    <name type="ordered locus">VIBHAR_03275</name>
</gene>
<dbReference type="EC" id="7.2.1.1" evidence="1"/>
<dbReference type="EMBL" id="AF165980">
    <property type="protein sequence ID" value="AAF15411.1"/>
    <property type="molecule type" value="Genomic_DNA"/>
</dbReference>
<dbReference type="EMBL" id="CP000789">
    <property type="protein sequence ID" value="ABU72223.1"/>
    <property type="status" value="ALT_INIT"/>
    <property type="molecule type" value="Genomic_DNA"/>
</dbReference>
<dbReference type="RefSeq" id="WP_041853286.1">
    <property type="nucleotide sequence ID" value="NC_009783.1"/>
</dbReference>
<dbReference type="SMR" id="Q9RFW1"/>
<dbReference type="KEGG" id="vha:VIBHAR_03275"/>
<dbReference type="PATRIC" id="fig|338187.36.peg.3202"/>
<dbReference type="Proteomes" id="UP000008152">
    <property type="component" value="Chromosome I"/>
</dbReference>
<dbReference type="GO" id="GO:0016655">
    <property type="term" value="F:oxidoreductase activity, acting on NAD(P)H, quinone or similar compound as acceptor"/>
    <property type="evidence" value="ECO:0007669"/>
    <property type="project" value="UniProtKB-UniRule"/>
</dbReference>
<dbReference type="GO" id="GO:0006814">
    <property type="term" value="P:sodium ion transport"/>
    <property type="evidence" value="ECO:0007669"/>
    <property type="project" value="UniProtKB-UniRule"/>
</dbReference>
<dbReference type="HAMAP" id="MF_00425">
    <property type="entry name" value="NqrA"/>
    <property type="match status" value="1"/>
</dbReference>
<dbReference type="InterPro" id="IPR008703">
    <property type="entry name" value="NqrA"/>
</dbReference>
<dbReference type="InterPro" id="IPR056148">
    <property type="entry name" value="NQRA_2nd"/>
</dbReference>
<dbReference type="InterPro" id="IPR022615">
    <property type="entry name" value="NqrA_C_domain"/>
</dbReference>
<dbReference type="InterPro" id="IPR056147">
    <property type="entry name" value="NQRA_N"/>
</dbReference>
<dbReference type="NCBIfam" id="TIGR01936">
    <property type="entry name" value="nqrA"/>
    <property type="match status" value="1"/>
</dbReference>
<dbReference type="NCBIfam" id="NF003759">
    <property type="entry name" value="PRK05352.1-2"/>
    <property type="match status" value="1"/>
</dbReference>
<dbReference type="PANTHER" id="PTHR37839">
    <property type="entry name" value="NA(+)-TRANSLOCATING NADH-QUINONE REDUCTASE SUBUNIT A"/>
    <property type="match status" value="1"/>
</dbReference>
<dbReference type="PANTHER" id="PTHR37839:SF1">
    <property type="entry name" value="NA(+)-TRANSLOCATING NADH-QUINONE REDUCTASE SUBUNIT A"/>
    <property type="match status" value="1"/>
</dbReference>
<dbReference type="Pfam" id="PF24836">
    <property type="entry name" value="NQRA_2nd"/>
    <property type="match status" value="1"/>
</dbReference>
<dbReference type="Pfam" id="PF05896">
    <property type="entry name" value="NQRA_N"/>
    <property type="match status" value="1"/>
</dbReference>
<dbReference type="Pfam" id="PF11973">
    <property type="entry name" value="NQRA_SLBB"/>
    <property type="match status" value="1"/>
</dbReference>
<protein>
    <recommendedName>
        <fullName evidence="1">Na(+)-translocating NADH-quinone reductase subunit A</fullName>
        <shortName evidence="1">Na(+)-NQR subunit A</shortName>
        <shortName evidence="1">Na(+)-translocating NQR subunit A</shortName>
        <ecNumber evidence="1">7.2.1.1</ecNumber>
    </recommendedName>
    <alternativeName>
        <fullName evidence="1">NQR complex subunit A</fullName>
    </alternativeName>
    <alternativeName>
        <fullName evidence="1">NQR-1 subunit A</fullName>
    </alternativeName>
</protein>